<gene>
    <name type="primary">rtf2</name>
    <name type="synonym">rtfdc1</name>
    <name type="ORF">DDB_G0288549</name>
</gene>
<proteinExistence type="inferred from homology"/>
<keyword id="KW-0158">Chromosome</keyword>
<keyword id="KW-1185">Reference proteome</keyword>
<name>RTF2_DICDI</name>
<sequence>MGLDGGTIPTRCELVKTKKKEVKVFDKDQVDFGKWFLCALAQDTLSEPIVLDDLGNLFNKDNIIEALLNGSLETSKNFSHIRSLRSIYTVNFSPNPAHEKDSTVSPWLCPITKIEVGSSNYKFKFLKTCGHVFSEKAFKELKNDDSNNNNNNNNNNKKEIDSSKDNLSCFLCSKEYITNDLITINPSGEEFEQMKVTLQEKLANSKKKSSKKSDKKPDNKKRSLESNLASESSFTSNTLAQTNEEISKKMKSEAFSSIFKSNSNNDTTKTPNK</sequence>
<reference key="1">
    <citation type="journal article" date="2005" name="Nature">
        <title>The genome of the social amoeba Dictyostelium discoideum.</title>
        <authorList>
            <person name="Eichinger L."/>
            <person name="Pachebat J.A."/>
            <person name="Gloeckner G."/>
            <person name="Rajandream M.A."/>
            <person name="Sucgang R."/>
            <person name="Berriman M."/>
            <person name="Song J."/>
            <person name="Olsen R."/>
            <person name="Szafranski K."/>
            <person name="Xu Q."/>
            <person name="Tunggal B."/>
            <person name="Kummerfeld S."/>
            <person name="Madera M."/>
            <person name="Konfortov B.A."/>
            <person name="Rivero F."/>
            <person name="Bankier A.T."/>
            <person name="Lehmann R."/>
            <person name="Hamlin N."/>
            <person name="Davies R."/>
            <person name="Gaudet P."/>
            <person name="Fey P."/>
            <person name="Pilcher K."/>
            <person name="Chen G."/>
            <person name="Saunders D."/>
            <person name="Sodergren E.J."/>
            <person name="Davis P."/>
            <person name="Kerhornou A."/>
            <person name="Nie X."/>
            <person name="Hall N."/>
            <person name="Anjard C."/>
            <person name="Hemphill L."/>
            <person name="Bason N."/>
            <person name="Farbrother P."/>
            <person name="Desany B."/>
            <person name="Just E."/>
            <person name="Morio T."/>
            <person name="Rost R."/>
            <person name="Churcher C.M."/>
            <person name="Cooper J."/>
            <person name="Haydock S."/>
            <person name="van Driessche N."/>
            <person name="Cronin A."/>
            <person name="Goodhead I."/>
            <person name="Muzny D.M."/>
            <person name="Mourier T."/>
            <person name="Pain A."/>
            <person name="Lu M."/>
            <person name="Harper D."/>
            <person name="Lindsay R."/>
            <person name="Hauser H."/>
            <person name="James K.D."/>
            <person name="Quiles M."/>
            <person name="Madan Babu M."/>
            <person name="Saito T."/>
            <person name="Buchrieser C."/>
            <person name="Wardroper A."/>
            <person name="Felder M."/>
            <person name="Thangavelu M."/>
            <person name="Johnson D."/>
            <person name="Knights A."/>
            <person name="Loulseged H."/>
            <person name="Mungall K.L."/>
            <person name="Oliver K."/>
            <person name="Price C."/>
            <person name="Quail M.A."/>
            <person name="Urushihara H."/>
            <person name="Hernandez J."/>
            <person name="Rabbinowitsch E."/>
            <person name="Steffen D."/>
            <person name="Sanders M."/>
            <person name="Ma J."/>
            <person name="Kohara Y."/>
            <person name="Sharp S."/>
            <person name="Simmonds M.N."/>
            <person name="Spiegler S."/>
            <person name="Tivey A."/>
            <person name="Sugano S."/>
            <person name="White B."/>
            <person name="Walker D."/>
            <person name="Woodward J.R."/>
            <person name="Winckler T."/>
            <person name="Tanaka Y."/>
            <person name="Shaulsky G."/>
            <person name="Schleicher M."/>
            <person name="Weinstock G.M."/>
            <person name="Rosenthal A."/>
            <person name="Cox E.C."/>
            <person name="Chisholm R.L."/>
            <person name="Gibbs R.A."/>
            <person name="Loomis W.F."/>
            <person name="Platzer M."/>
            <person name="Kay R.R."/>
            <person name="Williams J.G."/>
            <person name="Dear P.H."/>
            <person name="Noegel A.A."/>
            <person name="Barrell B.G."/>
            <person name="Kuspa A."/>
        </authorList>
    </citation>
    <scope>NUCLEOTIDE SEQUENCE [LARGE SCALE GENOMIC DNA]</scope>
    <source>
        <strain>AX4</strain>
    </source>
</reference>
<comment type="function">
    <text evidence="1">Replication termination factor which is a component of the elongating replisome. Interacts with nascent DNA.</text>
</comment>
<comment type="subcellular location">
    <subcellularLocation>
        <location evidence="1">Chromosome</location>
    </subcellularLocation>
    <text evidence="1">Localizes at the replication fork.</text>
</comment>
<comment type="similarity">
    <text evidence="3">Belongs to the rtf2 family.</text>
</comment>
<evidence type="ECO:0000250" key="1">
    <source>
        <dbReference type="UniProtKB" id="Q9BY42"/>
    </source>
</evidence>
<evidence type="ECO:0000256" key="2">
    <source>
        <dbReference type="SAM" id="MobiDB-lite"/>
    </source>
</evidence>
<evidence type="ECO:0000305" key="3"/>
<feature type="chain" id="PRO_0000327239" description="Replication termination factor 2">
    <location>
        <begin position="1"/>
        <end position="273"/>
    </location>
</feature>
<feature type="region of interest" description="Disordered" evidence="2">
    <location>
        <begin position="202"/>
        <end position="247"/>
    </location>
</feature>
<feature type="compositionally biased region" description="Basic and acidic residues" evidence="2">
    <location>
        <begin position="211"/>
        <end position="224"/>
    </location>
</feature>
<feature type="compositionally biased region" description="Polar residues" evidence="2">
    <location>
        <begin position="225"/>
        <end position="244"/>
    </location>
</feature>
<accession>Q54IS6</accession>
<protein>
    <recommendedName>
        <fullName evidence="3">Replication termination factor 2</fullName>
        <shortName>RTF2</shortName>
    </recommendedName>
    <alternativeName>
        <fullName>Replication termination factor 2 domain-containing protein 1</fullName>
    </alternativeName>
</protein>
<dbReference type="EMBL" id="AAFI02000116">
    <property type="protein sequence ID" value="EAL63167.1"/>
    <property type="molecule type" value="Genomic_DNA"/>
</dbReference>
<dbReference type="RefSeq" id="XP_636671.1">
    <property type="nucleotide sequence ID" value="XM_631579.1"/>
</dbReference>
<dbReference type="FunCoup" id="Q54IS6">
    <property type="interactions" value="629"/>
</dbReference>
<dbReference type="STRING" id="44689.Q54IS6"/>
<dbReference type="PaxDb" id="44689-DDB0267130"/>
<dbReference type="EnsemblProtists" id="EAL63167">
    <property type="protein sequence ID" value="EAL63167"/>
    <property type="gene ID" value="DDB_G0288549"/>
</dbReference>
<dbReference type="GeneID" id="8626684"/>
<dbReference type="KEGG" id="ddi:DDB_G0288549"/>
<dbReference type="dictyBase" id="DDB_G0288549"/>
<dbReference type="VEuPathDB" id="AmoebaDB:DDB_G0288549"/>
<dbReference type="eggNOG" id="KOG3113">
    <property type="taxonomic scope" value="Eukaryota"/>
</dbReference>
<dbReference type="HOGENOM" id="CLU_048955_2_0_1"/>
<dbReference type="InParanoid" id="Q54IS6"/>
<dbReference type="OMA" id="KVCTEER"/>
<dbReference type="PhylomeDB" id="Q54IS6"/>
<dbReference type="PRO" id="PR:Q54IS6"/>
<dbReference type="Proteomes" id="UP000002195">
    <property type="component" value="Chromosome 5"/>
</dbReference>
<dbReference type="GO" id="GO:0005694">
    <property type="term" value="C:chromosome"/>
    <property type="evidence" value="ECO:0007669"/>
    <property type="project" value="UniProtKB-SubCell"/>
</dbReference>
<dbReference type="GO" id="GO:0005634">
    <property type="term" value="C:nucleus"/>
    <property type="evidence" value="ECO:0000318"/>
    <property type="project" value="GO_Central"/>
</dbReference>
<dbReference type="GO" id="GO:1902979">
    <property type="term" value="P:mitotic DNA replication termination"/>
    <property type="evidence" value="ECO:0007669"/>
    <property type="project" value="InterPro"/>
</dbReference>
<dbReference type="CDD" id="cd16653">
    <property type="entry name" value="RING-like_Rtf2"/>
    <property type="match status" value="1"/>
</dbReference>
<dbReference type="InterPro" id="IPR006735">
    <property type="entry name" value="Rtf2"/>
</dbReference>
<dbReference type="InterPro" id="IPR027799">
    <property type="entry name" value="Rtf2_RING-finger"/>
</dbReference>
<dbReference type="PANTHER" id="PTHR12775">
    <property type="entry name" value="PROTEIN C20ORF43 HOMOLOG"/>
    <property type="match status" value="1"/>
</dbReference>
<dbReference type="PANTHER" id="PTHR12775:SF0">
    <property type="entry name" value="REPLICATION TERMINATION FACTOR 2"/>
    <property type="match status" value="1"/>
</dbReference>
<dbReference type="Pfam" id="PF04641">
    <property type="entry name" value="Rtf2"/>
    <property type="match status" value="1"/>
</dbReference>
<organism>
    <name type="scientific">Dictyostelium discoideum</name>
    <name type="common">Social amoeba</name>
    <dbReference type="NCBI Taxonomy" id="44689"/>
    <lineage>
        <taxon>Eukaryota</taxon>
        <taxon>Amoebozoa</taxon>
        <taxon>Evosea</taxon>
        <taxon>Eumycetozoa</taxon>
        <taxon>Dictyostelia</taxon>
        <taxon>Dictyosteliales</taxon>
        <taxon>Dictyosteliaceae</taxon>
        <taxon>Dictyostelium</taxon>
    </lineage>
</organism>